<reference key="1">
    <citation type="journal article" date="2007" name="Nature">
        <title>Evolution of genes and genomes on the Drosophila phylogeny.</title>
        <authorList>
            <consortium name="Drosophila 12 genomes consortium"/>
        </authorList>
    </citation>
    <scope>NUCLEOTIDE SEQUENCE [LARGE SCALE GENOMIC DNA]</scope>
    <source>
        <strain>Tucson 15287-2541.00</strain>
    </source>
</reference>
<sequence>MLQISARFYCKIAKQQISELPKISKPSKLLDFKQLHHPTKVPQTPVPTAFPDATNNSEIEIDAKTIQLLERLSLVDLDSEQALATLKSSIQFADKIEHIDTHNVRPLYTVLEHQQLQLRNDRVAEGDCREQLLRIAKVTDEDYYVSPPGNIPLEQLDK</sequence>
<comment type="function">
    <text evidence="1">Allows the formation of correctly charged Gln-tRNA(Gln) through the transamidation of misacylated Glu-tRNA(Gln) in the mitochondria. The reaction takes place in the presence of glutamine and ATP through an activated gamma-phospho-Glu-tRNA(Gln).</text>
</comment>
<comment type="catalytic activity">
    <reaction evidence="1">
        <text>L-glutamyl-tRNA(Gln) + L-glutamine + ATP + H2O = L-glutaminyl-tRNA(Gln) + L-glutamate + ADP + phosphate + H(+)</text>
        <dbReference type="Rhea" id="RHEA:17521"/>
        <dbReference type="Rhea" id="RHEA-COMP:9681"/>
        <dbReference type="Rhea" id="RHEA-COMP:9684"/>
        <dbReference type="ChEBI" id="CHEBI:15377"/>
        <dbReference type="ChEBI" id="CHEBI:15378"/>
        <dbReference type="ChEBI" id="CHEBI:29985"/>
        <dbReference type="ChEBI" id="CHEBI:30616"/>
        <dbReference type="ChEBI" id="CHEBI:43474"/>
        <dbReference type="ChEBI" id="CHEBI:58359"/>
        <dbReference type="ChEBI" id="CHEBI:78520"/>
        <dbReference type="ChEBI" id="CHEBI:78521"/>
        <dbReference type="ChEBI" id="CHEBI:456216"/>
    </reaction>
</comment>
<comment type="subunit">
    <text evidence="1">Subunit of the heterotrimeric GatCAB amidotransferase (AdT) complex, composed of A, B and C subunits.</text>
</comment>
<comment type="subcellular location">
    <subcellularLocation>
        <location evidence="1">Mitochondrion</location>
    </subcellularLocation>
</comment>
<comment type="miscellaneous">
    <text evidence="1">This protein may be expected to contain an N-terminal transit peptide but none has been predicted.</text>
</comment>
<comment type="similarity">
    <text evidence="1">Belongs to the GatC family.</text>
</comment>
<feature type="chain" id="PRO_0000413302" description="Glutamyl-tRNA(Gln) amidotransferase subunit C, mitochondrial">
    <location>
        <begin position="1"/>
        <end position="158"/>
    </location>
</feature>
<organism>
    <name type="scientific">Drosophila grimshawi</name>
    <name type="common">Hawaiian fruit fly</name>
    <name type="synonym">Idiomyia grimshawi</name>
    <dbReference type="NCBI Taxonomy" id="7222"/>
    <lineage>
        <taxon>Eukaryota</taxon>
        <taxon>Metazoa</taxon>
        <taxon>Ecdysozoa</taxon>
        <taxon>Arthropoda</taxon>
        <taxon>Hexapoda</taxon>
        <taxon>Insecta</taxon>
        <taxon>Pterygota</taxon>
        <taxon>Neoptera</taxon>
        <taxon>Endopterygota</taxon>
        <taxon>Diptera</taxon>
        <taxon>Brachycera</taxon>
        <taxon>Muscomorpha</taxon>
        <taxon>Ephydroidea</taxon>
        <taxon>Drosophilidae</taxon>
        <taxon>Drosophila</taxon>
        <taxon>Hawaiian Drosophila</taxon>
    </lineage>
</organism>
<accession>B4JCX8</accession>
<protein>
    <recommendedName>
        <fullName evidence="1">Glutamyl-tRNA(Gln) amidotransferase subunit C, mitochondrial</fullName>
        <shortName evidence="1">Glu-AdT subunit C</shortName>
        <ecNumber evidence="1">6.3.5.-</ecNumber>
    </recommendedName>
</protein>
<gene>
    <name type="ORF">GH10615</name>
</gene>
<keyword id="KW-0067">ATP-binding</keyword>
<keyword id="KW-0436">Ligase</keyword>
<keyword id="KW-0496">Mitochondrion</keyword>
<keyword id="KW-0547">Nucleotide-binding</keyword>
<keyword id="KW-0648">Protein biosynthesis</keyword>
<keyword id="KW-1185">Reference proteome</keyword>
<evidence type="ECO:0000255" key="1">
    <source>
        <dbReference type="HAMAP-Rule" id="MF_03149"/>
    </source>
</evidence>
<proteinExistence type="inferred from homology"/>
<dbReference type="EC" id="6.3.5.-" evidence="1"/>
<dbReference type="EMBL" id="CH916368">
    <property type="protein sequence ID" value="EDW03217.1"/>
    <property type="molecule type" value="Genomic_DNA"/>
</dbReference>
<dbReference type="RefSeq" id="XP_001988350.1">
    <property type="nucleotide sequence ID" value="XM_001988314.1"/>
</dbReference>
<dbReference type="SMR" id="B4JCX8"/>
<dbReference type="FunCoup" id="B4JCX8">
    <property type="interactions" value="1123"/>
</dbReference>
<dbReference type="STRING" id="7222.B4JCX8"/>
<dbReference type="EnsemblMetazoa" id="FBtr0146029">
    <property type="protein sequence ID" value="FBpp0144521"/>
    <property type="gene ID" value="FBgn0118096"/>
</dbReference>
<dbReference type="EnsemblMetazoa" id="XM_043214695.1">
    <property type="protein sequence ID" value="XP_043070630.1"/>
    <property type="gene ID" value="LOC6561865"/>
</dbReference>
<dbReference type="eggNOG" id="KOG4247">
    <property type="taxonomic scope" value="Eukaryota"/>
</dbReference>
<dbReference type="HOGENOM" id="CLU_105899_0_1_1"/>
<dbReference type="InParanoid" id="B4JCX8"/>
<dbReference type="OMA" id="RCAKRTD"/>
<dbReference type="OrthoDB" id="5394539at2759"/>
<dbReference type="PhylomeDB" id="B4JCX8"/>
<dbReference type="Proteomes" id="UP000001070">
    <property type="component" value="Unassembled WGS sequence"/>
</dbReference>
<dbReference type="GO" id="GO:0030956">
    <property type="term" value="C:glutamyl-tRNA(Gln) amidotransferase complex"/>
    <property type="evidence" value="ECO:0007669"/>
    <property type="project" value="UniProtKB-UniRule"/>
</dbReference>
<dbReference type="GO" id="GO:0005739">
    <property type="term" value="C:mitochondrion"/>
    <property type="evidence" value="ECO:0007669"/>
    <property type="project" value="UniProtKB-SubCell"/>
</dbReference>
<dbReference type="GO" id="GO:0005524">
    <property type="term" value="F:ATP binding"/>
    <property type="evidence" value="ECO:0007669"/>
    <property type="project" value="UniProtKB-KW"/>
</dbReference>
<dbReference type="GO" id="GO:0050567">
    <property type="term" value="F:glutaminyl-tRNA synthase (glutamine-hydrolyzing) activity"/>
    <property type="evidence" value="ECO:0007669"/>
    <property type="project" value="UniProtKB-UniRule"/>
</dbReference>
<dbReference type="GO" id="GO:0070681">
    <property type="term" value="P:glutaminyl-tRNAGln biosynthesis via transamidation"/>
    <property type="evidence" value="ECO:0007669"/>
    <property type="project" value="UniProtKB-UniRule"/>
</dbReference>
<dbReference type="GO" id="GO:0032543">
    <property type="term" value="P:mitochondrial translation"/>
    <property type="evidence" value="ECO:0007669"/>
    <property type="project" value="UniProtKB-UniRule"/>
</dbReference>
<dbReference type="GO" id="GO:0006450">
    <property type="term" value="P:regulation of translational fidelity"/>
    <property type="evidence" value="ECO:0007669"/>
    <property type="project" value="InterPro"/>
</dbReference>
<dbReference type="HAMAP" id="MF_00122">
    <property type="entry name" value="GatC"/>
    <property type="match status" value="1"/>
</dbReference>
<dbReference type="InterPro" id="IPR036113">
    <property type="entry name" value="Asp/Glu-ADT_sf_sub_c"/>
</dbReference>
<dbReference type="InterPro" id="IPR003837">
    <property type="entry name" value="GatC"/>
</dbReference>
<dbReference type="NCBIfam" id="TIGR00135">
    <property type="entry name" value="gatC"/>
    <property type="match status" value="1"/>
</dbReference>
<dbReference type="PANTHER" id="PTHR15004">
    <property type="entry name" value="GLUTAMYL-TRNA(GLN) AMIDOTRANSFERASE SUBUNIT C, MITOCHONDRIAL"/>
    <property type="match status" value="1"/>
</dbReference>
<dbReference type="PANTHER" id="PTHR15004:SF0">
    <property type="entry name" value="GLUTAMYL-TRNA(GLN) AMIDOTRANSFERASE SUBUNIT C, MITOCHONDRIAL"/>
    <property type="match status" value="1"/>
</dbReference>
<dbReference type="Pfam" id="PF02686">
    <property type="entry name" value="GatC"/>
    <property type="match status" value="1"/>
</dbReference>
<dbReference type="SUPFAM" id="SSF141000">
    <property type="entry name" value="Glu-tRNAGln amidotransferase C subunit"/>
    <property type="match status" value="1"/>
</dbReference>
<name>GATC_DROGR</name>